<name>Y2723_EXISA</name>
<comment type="similarity">
    <text evidence="1">Belongs to the UPF0297 family.</text>
</comment>
<accession>C4L552</accession>
<gene>
    <name type="ordered locus">EAT1b_2723</name>
</gene>
<proteinExistence type="inferred from homology"/>
<protein>
    <recommendedName>
        <fullName evidence="1">UPF0297 protein EAT1b_2723</fullName>
    </recommendedName>
</protein>
<evidence type="ECO:0000255" key="1">
    <source>
        <dbReference type="HAMAP-Rule" id="MF_01507"/>
    </source>
</evidence>
<dbReference type="EMBL" id="CP001615">
    <property type="protein sequence ID" value="ACQ71637.1"/>
    <property type="molecule type" value="Genomic_DNA"/>
</dbReference>
<dbReference type="RefSeq" id="WP_015881196.1">
    <property type="nucleotide sequence ID" value="NZ_MOEL01000013.1"/>
</dbReference>
<dbReference type="SMR" id="C4L552"/>
<dbReference type="STRING" id="360911.EAT1b_2723"/>
<dbReference type="KEGG" id="eat:EAT1b_2723"/>
<dbReference type="eggNOG" id="COG4472">
    <property type="taxonomic scope" value="Bacteria"/>
</dbReference>
<dbReference type="HOGENOM" id="CLU_162466_0_0_9"/>
<dbReference type="OrthoDB" id="9796303at2"/>
<dbReference type="Proteomes" id="UP000000716">
    <property type="component" value="Chromosome"/>
</dbReference>
<dbReference type="HAMAP" id="MF_01507">
    <property type="entry name" value="UPF0297"/>
    <property type="match status" value="1"/>
</dbReference>
<dbReference type="InterPro" id="IPR009309">
    <property type="entry name" value="IreB"/>
</dbReference>
<dbReference type="NCBIfam" id="NF003997">
    <property type="entry name" value="PRK05473.1"/>
    <property type="match status" value="1"/>
</dbReference>
<dbReference type="PANTHER" id="PTHR40067">
    <property type="entry name" value="UPF0297 PROTEIN YRZL"/>
    <property type="match status" value="1"/>
</dbReference>
<dbReference type="PANTHER" id="PTHR40067:SF1">
    <property type="entry name" value="UPF0297 PROTEIN YRZL"/>
    <property type="match status" value="1"/>
</dbReference>
<dbReference type="Pfam" id="PF06135">
    <property type="entry name" value="IreB"/>
    <property type="match status" value="1"/>
</dbReference>
<dbReference type="PIRSF" id="PIRSF037258">
    <property type="entry name" value="DUF965_bac"/>
    <property type="match status" value="1"/>
</dbReference>
<reference key="1">
    <citation type="journal article" date="2011" name="J. Bacteriol.">
        <title>Complete genome sequence of the Thermophilic Bacterium Exiguobacterium sp. AT1b.</title>
        <authorList>
            <person name="Vishnivetskaya T.A."/>
            <person name="Lucas S."/>
            <person name="Copeland A."/>
            <person name="Lapidus A."/>
            <person name="Glavina del Rio T."/>
            <person name="Dalin E."/>
            <person name="Tice H."/>
            <person name="Bruce D.C."/>
            <person name="Goodwin L.A."/>
            <person name="Pitluck S."/>
            <person name="Saunders E."/>
            <person name="Brettin T."/>
            <person name="Detter C."/>
            <person name="Han C."/>
            <person name="Larimer F."/>
            <person name="Land M.L."/>
            <person name="Hauser L.J."/>
            <person name="Kyrpides N.C."/>
            <person name="Ovchinnikova G."/>
            <person name="Kathariou S."/>
            <person name="Ramaley R.F."/>
            <person name="Rodrigues D.F."/>
            <person name="Hendrix C."/>
            <person name="Richardson P."/>
            <person name="Tiedje J.M."/>
        </authorList>
    </citation>
    <scope>NUCLEOTIDE SEQUENCE [LARGE SCALE GENOMIC DNA]</scope>
    <source>
        <strain>ATCC BAA-1283 / AT1b</strain>
    </source>
</reference>
<organism>
    <name type="scientific">Exiguobacterium sp. (strain ATCC BAA-1283 / AT1b)</name>
    <dbReference type="NCBI Taxonomy" id="360911"/>
    <lineage>
        <taxon>Bacteria</taxon>
        <taxon>Bacillati</taxon>
        <taxon>Bacillota</taxon>
        <taxon>Bacilli</taxon>
        <taxon>Bacillales</taxon>
        <taxon>Bacillales Family XII. Incertae Sedis</taxon>
        <taxon>Exiguobacterium</taxon>
    </lineage>
</organism>
<sequence>MSQMDRTMQFNFPEDDQRANTRETLITVYQALEEKGYQPINQIVGYLLSGDPAYIPRHNDARNLIRKIERDELLEELVKSYLNDRRED</sequence>
<feature type="chain" id="PRO_1000215335" description="UPF0297 protein EAT1b_2723">
    <location>
        <begin position="1"/>
        <end position="88"/>
    </location>
</feature>